<dbReference type="EC" id="2.4.99.17" evidence="1"/>
<dbReference type="EMBL" id="CP000708">
    <property type="protein sequence ID" value="ABQ61713.1"/>
    <property type="molecule type" value="Genomic_DNA"/>
</dbReference>
<dbReference type="RefSeq" id="WP_002964220.1">
    <property type="nucleotide sequence ID" value="NC_009505.1"/>
</dbReference>
<dbReference type="SMR" id="A5VQL9"/>
<dbReference type="GeneID" id="97533650"/>
<dbReference type="KEGG" id="bov:BOV_1053"/>
<dbReference type="HOGENOM" id="CLU_039110_1_1_5"/>
<dbReference type="PhylomeDB" id="A5VQL9"/>
<dbReference type="UniPathway" id="UPA00392"/>
<dbReference type="Proteomes" id="UP000006383">
    <property type="component" value="Chromosome I"/>
</dbReference>
<dbReference type="GO" id="GO:0005737">
    <property type="term" value="C:cytoplasm"/>
    <property type="evidence" value="ECO:0007669"/>
    <property type="project" value="UniProtKB-SubCell"/>
</dbReference>
<dbReference type="GO" id="GO:0051075">
    <property type="term" value="F:S-adenosylmethionine:tRNA ribosyltransferase-isomerase activity"/>
    <property type="evidence" value="ECO:0007669"/>
    <property type="project" value="UniProtKB-EC"/>
</dbReference>
<dbReference type="GO" id="GO:0008616">
    <property type="term" value="P:queuosine biosynthetic process"/>
    <property type="evidence" value="ECO:0007669"/>
    <property type="project" value="UniProtKB-UniRule"/>
</dbReference>
<dbReference type="GO" id="GO:0002099">
    <property type="term" value="P:tRNA wobble guanine modification"/>
    <property type="evidence" value="ECO:0007669"/>
    <property type="project" value="TreeGrafter"/>
</dbReference>
<dbReference type="FunFam" id="3.40.1780.10:FF:000001">
    <property type="entry name" value="S-adenosylmethionine:tRNA ribosyltransferase-isomerase"/>
    <property type="match status" value="1"/>
</dbReference>
<dbReference type="Gene3D" id="2.40.10.240">
    <property type="entry name" value="QueA-like"/>
    <property type="match status" value="1"/>
</dbReference>
<dbReference type="Gene3D" id="3.40.1780.10">
    <property type="entry name" value="QueA-like"/>
    <property type="match status" value="1"/>
</dbReference>
<dbReference type="HAMAP" id="MF_00113">
    <property type="entry name" value="QueA"/>
    <property type="match status" value="1"/>
</dbReference>
<dbReference type="InterPro" id="IPR003699">
    <property type="entry name" value="QueA"/>
</dbReference>
<dbReference type="InterPro" id="IPR042118">
    <property type="entry name" value="QueA_dom1"/>
</dbReference>
<dbReference type="InterPro" id="IPR042119">
    <property type="entry name" value="QueA_dom2"/>
</dbReference>
<dbReference type="InterPro" id="IPR036100">
    <property type="entry name" value="QueA_sf"/>
</dbReference>
<dbReference type="NCBIfam" id="NF001140">
    <property type="entry name" value="PRK00147.1"/>
    <property type="match status" value="1"/>
</dbReference>
<dbReference type="NCBIfam" id="TIGR00113">
    <property type="entry name" value="queA"/>
    <property type="match status" value="1"/>
</dbReference>
<dbReference type="PANTHER" id="PTHR30307">
    <property type="entry name" value="S-ADENOSYLMETHIONINE:TRNA RIBOSYLTRANSFERASE-ISOMERASE"/>
    <property type="match status" value="1"/>
</dbReference>
<dbReference type="PANTHER" id="PTHR30307:SF0">
    <property type="entry name" value="S-ADENOSYLMETHIONINE:TRNA RIBOSYLTRANSFERASE-ISOMERASE"/>
    <property type="match status" value="1"/>
</dbReference>
<dbReference type="Pfam" id="PF02547">
    <property type="entry name" value="Queuosine_synth"/>
    <property type="match status" value="1"/>
</dbReference>
<dbReference type="SUPFAM" id="SSF111337">
    <property type="entry name" value="QueA-like"/>
    <property type="match status" value="1"/>
</dbReference>
<comment type="function">
    <text evidence="1">Transfers and isomerizes the ribose moiety from AdoMet to the 7-aminomethyl group of 7-deazaguanine (preQ1-tRNA) to give epoxyqueuosine (oQ-tRNA).</text>
</comment>
<comment type="catalytic activity">
    <reaction evidence="1">
        <text>7-aminomethyl-7-carbaguanosine(34) in tRNA + S-adenosyl-L-methionine = epoxyqueuosine(34) in tRNA + adenine + L-methionine + 2 H(+)</text>
        <dbReference type="Rhea" id="RHEA:32155"/>
        <dbReference type="Rhea" id="RHEA-COMP:10342"/>
        <dbReference type="Rhea" id="RHEA-COMP:18582"/>
        <dbReference type="ChEBI" id="CHEBI:15378"/>
        <dbReference type="ChEBI" id="CHEBI:16708"/>
        <dbReference type="ChEBI" id="CHEBI:57844"/>
        <dbReference type="ChEBI" id="CHEBI:59789"/>
        <dbReference type="ChEBI" id="CHEBI:82833"/>
        <dbReference type="ChEBI" id="CHEBI:194443"/>
        <dbReference type="EC" id="2.4.99.17"/>
    </reaction>
</comment>
<comment type="pathway">
    <text evidence="1">tRNA modification; tRNA-queuosine biosynthesis.</text>
</comment>
<comment type="subunit">
    <text evidence="1">Monomer.</text>
</comment>
<comment type="subcellular location">
    <subcellularLocation>
        <location evidence="1">Cytoplasm</location>
    </subcellularLocation>
</comment>
<comment type="similarity">
    <text evidence="1">Belongs to the QueA family.</text>
</comment>
<evidence type="ECO:0000255" key="1">
    <source>
        <dbReference type="HAMAP-Rule" id="MF_00113"/>
    </source>
</evidence>
<reference key="1">
    <citation type="journal article" date="2009" name="PLoS ONE">
        <title>Genome degradation in Brucella ovis corresponds with narrowing of its host range and tissue tropism.</title>
        <authorList>
            <person name="Tsolis R.M."/>
            <person name="Seshadri R."/>
            <person name="Santos R.L."/>
            <person name="Sangari F.J."/>
            <person name="Lobo J.M."/>
            <person name="de Jong M.F."/>
            <person name="Ren Q."/>
            <person name="Myers G."/>
            <person name="Brinkac L.M."/>
            <person name="Nelson W.C."/>
            <person name="Deboy R.T."/>
            <person name="Angiuoli S."/>
            <person name="Khouri H."/>
            <person name="Dimitrov G."/>
            <person name="Robinson J.R."/>
            <person name="Mulligan S."/>
            <person name="Walker R.L."/>
            <person name="Elzer P.E."/>
            <person name="Hassan K.A."/>
            <person name="Paulsen I.T."/>
        </authorList>
    </citation>
    <scope>NUCLEOTIDE SEQUENCE [LARGE SCALE GENOMIC DNA]</scope>
    <source>
        <strain>ATCC 25840 / 63/290 / NCTC 10512</strain>
    </source>
</reference>
<name>QUEA_BRUO2</name>
<accession>A5VQL9</accession>
<organism>
    <name type="scientific">Brucella ovis (strain ATCC 25840 / 63/290 / NCTC 10512)</name>
    <dbReference type="NCBI Taxonomy" id="444178"/>
    <lineage>
        <taxon>Bacteria</taxon>
        <taxon>Pseudomonadati</taxon>
        <taxon>Pseudomonadota</taxon>
        <taxon>Alphaproteobacteria</taxon>
        <taxon>Hyphomicrobiales</taxon>
        <taxon>Brucellaceae</taxon>
        <taxon>Brucella/Ochrobactrum group</taxon>
        <taxon>Brucella</taxon>
    </lineage>
</organism>
<keyword id="KW-0963">Cytoplasm</keyword>
<keyword id="KW-0671">Queuosine biosynthesis</keyword>
<keyword id="KW-0949">S-adenosyl-L-methionine</keyword>
<keyword id="KW-0808">Transferase</keyword>
<proteinExistence type="inferred from homology"/>
<protein>
    <recommendedName>
        <fullName evidence="1">S-adenosylmethionine:tRNA ribosyltransferase-isomerase</fullName>
        <ecNumber evidence="1">2.4.99.17</ecNumber>
    </recommendedName>
    <alternativeName>
        <fullName evidence="1">Queuosine biosynthesis protein QueA</fullName>
    </alternativeName>
</protein>
<gene>
    <name evidence="1" type="primary">queA</name>
    <name type="ordered locus">BOV_1053</name>
</gene>
<sequence>MRVDLFDFDLPEERIALRPVEPRDHAKLLHVRPGEPFEDRHVYDLPDLLQPGDALVFNDTKVIPAQLEGMRERTGNISQVSATLHMRVGPDRWKAFLRPAKRVKEGDRIRFGHSGTSCFLGTLDATVAEKGDSGEALLVFDLSGAVLDEAIAAVGHIPLPPYIASKRPEDERDRKDYQTVYAREEGAVAAPTAGLHFTPDLLEKIKARGIEEHFVTLHVGAGTFLPVKADDTGDHKMHAEIGHVSQRTASALNAVHERGGRIICVGTTSLRLIESATGEDGVVRPWSGATDIFITPGYRFRAVDLLMTNFHLPRSTLFMLVSAFSGLDTMHAAYNYAIADGYRFYSYGDASLLERIDHDRHSA</sequence>
<feature type="chain" id="PRO_1000015184" description="S-adenosylmethionine:tRNA ribosyltransferase-isomerase">
    <location>
        <begin position="1"/>
        <end position="363"/>
    </location>
</feature>